<dbReference type="EMBL" id="X89213">
    <property type="protein sequence ID" value="CAA61499.1"/>
    <property type="molecule type" value="Genomic_RNA"/>
</dbReference>
<dbReference type="EMBL" id="AY780896">
    <property type="protein sequence ID" value="AAV52275.1"/>
    <property type="molecule type" value="mRNA"/>
</dbReference>
<dbReference type="EMBL" id="AY780894">
    <property type="protein sequence ID" value="AAV52273.1"/>
    <property type="molecule type" value="mRNA"/>
</dbReference>
<dbReference type="EMBL" id="X73872">
    <property type="protein sequence ID" value="CAA52075.1"/>
    <property type="molecule type" value="Genomic_RNA"/>
</dbReference>
<dbReference type="Proteomes" id="UP000007211">
    <property type="component" value="Genome"/>
</dbReference>
<dbReference type="InterPro" id="IPR003490">
    <property type="entry name" value="Rhabd_NV"/>
</dbReference>
<dbReference type="Pfam" id="PF02484">
    <property type="entry name" value="Rhabdo_NV"/>
    <property type="match status" value="1"/>
</dbReference>
<gene>
    <name type="primary">NV</name>
</gene>
<feature type="chain" id="PRO_0000282903" description="Non-virion protein">
    <location>
        <begin position="1"/>
        <end position="111"/>
    </location>
</feature>
<comment type="function">
    <text>Plays an essential role for the viral pathogenicity.</text>
</comment>
<comment type="similarity">
    <text evidence="1">Belongs to the novirhabdovirus NV protein family.</text>
</comment>
<evidence type="ECO:0000305" key="1"/>
<accession>Q08455</accession>
<sequence length="111" mass="13240">MDHRDINTNMEALREVLRYKNKVAGHGFLFDDGDLVWREEDDATWRRLCDVVNALISSKRMQRVLYMDLSITKGEGHLLFVDLQGTKNRLHKEPRFRRHLILIEDFLAYPR</sequence>
<organism>
    <name type="scientific">Infectious hematopoietic necrosis virus (strain Oregon69)</name>
    <name type="common">IHNV</name>
    <dbReference type="NCBI Taxonomy" id="429315"/>
    <lineage>
        <taxon>Viruses</taxon>
        <taxon>Riboviria</taxon>
        <taxon>Orthornavirae</taxon>
        <taxon>Negarnaviricota</taxon>
        <taxon>Haploviricotina</taxon>
        <taxon>Monjiviricetes</taxon>
        <taxon>Mononegavirales</taxon>
        <taxon>Rhabdoviridae</taxon>
        <taxon>Gammarhabdovirinae</taxon>
        <taxon>Novirhabdovirus</taxon>
        <taxon>Novirhabdovirus salmonid</taxon>
    </lineage>
</organism>
<protein>
    <recommendedName>
        <fullName>Non-virion protein</fullName>
    </recommendedName>
</protein>
<organismHost>
    <name type="scientific">Salmo</name>
    <dbReference type="NCBI Taxonomy" id="8028"/>
</organismHost>
<name>NV_IHNVO</name>
<reference key="1">
    <citation type="journal article" date="1996" name="J. Gen. Virol.">
        <title>Identification of the non-virion (NV) protein of fish rhabdoviruses viral haemorrhagic septicaemia virus and infectious haematopoietic necrosis virus.</title>
        <authorList>
            <person name="Schutze H."/>
            <person name="Enzmann P.J."/>
            <person name="Mundt E."/>
            <person name="Mettenleiter T.C."/>
        </authorList>
    </citation>
    <scope>NUCLEOTIDE SEQUENCE [GENOMIC RNA]</scope>
</reference>
<reference key="2">
    <citation type="journal article" date="1995" name="J. Gen. Virol.">
        <title>Complete genomic sequence of the fish rhabdovirus infectious haematopoietic necrosis virus.</title>
        <authorList>
            <person name="Schutze H."/>
            <person name="Enzmann P.J."/>
            <person name="Kuchling R."/>
            <person name="Mundt E."/>
            <person name="Niemann H."/>
            <person name="Mettenleiter T.C."/>
        </authorList>
    </citation>
    <scope>NUCLEOTIDE SEQUENCE [GENOMIC RNA]</scope>
</reference>
<reference key="3">
    <citation type="submission" date="2004-10" db="EMBL/GenBank/DDBJ databases">
        <title>Molecular epidemiology of IHN in Germany.</title>
        <authorList>
            <person name="Enzmann P.-J."/>
        </authorList>
    </citation>
    <scope>NUCLEOTIDE SEQUENCE [GENOMIC RNA]</scope>
    <source>
        <strain>Fs42</strain>
        <strain>Fs832</strain>
    </source>
</reference>
<proteinExistence type="inferred from homology"/>